<accession>Q07TA7</accession>
<sequence length="325" mass="34726">MSQPFVLAVPSKGRLQENAEAFFARAGLTLAKSGGARDYRGTIVGLDNVEVAYLSASEIAANLARGSVHFGVTGEDLIRESIVDADKRVALIDGLGFGRADVVVAVPQAWIDVRTMADLDDVTTGFRAQHNRRMRVATKYINLTRGFFASHGVVDYRIVESAGATEGAPAVGTAELIVDITTTGATLAANGLRVLDDGVMLRSQANLVASREADWTDATRETARIILDHIASRARAGKFKEVRTRFSGCNDALLAEAHAKFGVVSPFGGPTSSGMLTLHCPPAQLYGLSSFLRGHGAETVSVVSLDYVMDRENPLFAKLEAFLRS</sequence>
<proteinExistence type="inferred from homology"/>
<comment type="function">
    <text evidence="1">Catalyzes the condensation of ATP and 5-phosphoribose 1-diphosphate to form N'-(5'-phosphoribosyl)-ATP (PR-ATP). Has a crucial role in the pathway because the rate of histidine biosynthesis seems to be controlled primarily by regulation of HisG enzymatic activity.</text>
</comment>
<comment type="catalytic activity">
    <reaction evidence="1">
        <text>1-(5-phospho-beta-D-ribosyl)-ATP + diphosphate = 5-phospho-alpha-D-ribose 1-diphosphate + ATP</text>
        <dbReference type="Rhea" id="RHEA:18473"/>
        <dbReference type="ChEBI" id="CHEBI:30616"/>
        <dbReference type="ChEBI" id="CHEBI:33019"/>
        <dbReference type="ChEBI" id="CHEBI:58017"/>
        <dbReference type="ChEBI" id="CHEBI:73183"/>
        <dbReference type="EC" id="2.4.2.17"/>
    </reaction>
</comment>
<comment type="cofactor">
    <cofactor evidence="1">
        <name>Mg(2+)</name>
        <dbReference type="ChEBI" id="CHEBI:18420"/>
    </cofactor>
</comment>
<comment type="activity regulation">
    <text evidence="1">Feedback inhibited by histidine.</text>
</comment>
<comment type="pathway">
    <text evidence="1">Amino-acid biosynthesis; L-histidine biosynthesis; L-histidine from 5-phospho-alpha-D-ribose 1-diphosphate: step 1/9.</text>
</comment>
<comment type="subcellular location">
    <subcellularLocation>
        <location evidence="1">Cytoplasm</location>
    </subcellularLocation>
</comment>
<comment type="similarity">
    <text evidence="1">Belongs to the ATP phosphoribosyltransferase family. Long subfamily.</text>
</comment>
<evidence type="ECO:0000255" key="1">
    <source>
        <dbReference type="HAMAP-Rule" id="MF_00079"/>
    </source>
</evidence>
<organism>
    <name type="scientific">Rhodopseudomonas palustris (strain BisA53)</name>
    <dbReference type="NCBI Taxonomy" id="316055"/>
    <lineage>
        <taxon>Bacteria</taxon>
        <taxon>Pseudomonadati</taxon>
        <taxon>Pseudomonadota</taxon>
        <taxon>Alphaproteobacteria</taxon>
        <taxon>Hyphomicrobiales</taxon>
        <taxon>Nitrobacteraceae</taxon>
        <taxon>Rhodopseudomonas</taxon>
    </lineage>
</organism>
<dbReference type="EC" id="2.4.2.17" evidence="1"/>
<dbReference type="EMBL" id="CP000463">
    <property type="protein sequence ID" value="ABJ04827.1"/>
    <property type="molecule type" value="Genomic_DNA"/>
</dbReference>
<dbReference type="SMR" id="Q07TA7"/>
<dbReference type="STRING" id="316055.RPE_0871"/>
<dbReference type="KEGG" id="rpe:RPE_0871"/>
<dbReference type="eggNOG" id="COG0040">
    <property type="taxonomic scope" value="Bacteria"/>
</dbReference>
<dbReference type="HOGENOM" id="CLU_038115_0_1_5"/>
<dbReference type="OrthoDB" id="9806435at2"/>
<dbReference type="UniPathway" id="UPA00031">
    <property type="reaction ID" value="UER00006"/>
</dbReference>
<dbReference type="GO" id="GO:0005737">
    <property type="term" value="C:cytoplasm"/>
    <property type="evidence" value="ECO:0007669"/>
    <property type="project" value="UniProtKB-SubCell"/>
</dbReference>
<dbReference type="GO" id="GO:0005524">
    <property type="term" value="F:ATP binding"/>
    <property type="evidence" value="ECO:0007669"/>
    <property type="project" value="UniProtKB-KW"/>
</dbReference>
<dbReference type="GO" id="GO:0003879">
    <property type="term" value="F:ATP phosphoribosyltransferase activity"/>
    <property type="evidence" value="ECO:0007669"/>
    <property type="project" value="UniProtKB-UniRule"/>
</dbReference>
<dbReference type="GO" id="GO:0000287">
    <property type="term" value="F:magnesium ion binding"/>
    <property type="evidence" value="ECO:0007669"/>
    <property type="project" value="UniProtKB-UniRule"/>
</dbReference>
<dbReference type="GO" id="GO:0000105">
    <property type="term" value="P:L-histidine biosynthetic process"/>
    <property type="evidence" value="ECO:0007669"/>
    <property type="project" value="UniProtKB-UniRule"/>
</dbReference>
<dbReference type="CDD" id="cd13593">
    <property type="entry name" value="PBP2_HisGL3"/>
    <property type="match status" value="1"/>
</dbReference>
<dbReference type="Gene3D" id="3.40.190.10">
    <property type="entry name" value="Periplasmic binding protein-like II"/>
    <property type="match status" value="2"/>
</dbReference>
<dbReference type="HAMAP" id="MF_00079">
    <property type="entry name" value="HisG_Long"/>
    <property type="match status" value="1"/>
</dbReference>
<dbReference type="InterPro" id="IPR020621">
    <property type="entry name" value="ATP-PRT_HisG_long"/>
</dbReference>
<dbReference type="InterPro" id="IPR013820">
    <property type="entry name" value="ATP_PRibTrfase_cat"/>
</dbReference>
<dbReference type="InterPro" id="IPR018198">
    <property type="entry name" value="ATP_PRibTrfase_CS"/>
</dbReference>
<dbReference type="InterPro" id="IPR001348">
    <property type="entry name" value="ATP_PRibTrfase_HisG"/>
</dbReference>
<dbReference type="NCBIfam" id="TIGR00070">
    <property type="entry name" value="hisG"/>
    <property type="match status" value="1"/>
</dbReference>
<dbReference type="PANTHER" id="PTHR21403:SF8">
    <property type="entry name" value="ATP PHOSPHORIBOSYLTRANSFERASE"/>
    <property type="match status" value="1"/>
</dbReference>
<dbReference type="PANTHER" id="PTHR21403">
    <property type="entry name" value="ATP PHOSPHORIBOSYLTRANSFERASE ATP-PRTASE"/>
    <property type="match status" value="1"/>
</dbReference>
<dbReference type="Pfam" id="PF01634">
    <property type="entry name" value="HisG"/>
    <property type="match status" value="1"/>
</dbReference>
<dbReference type="SUPFAM" id="SSF53850">
    <property type="entry name" value="Periplasmic binding protein-like II"/>
    <property type="match status" value="1"/>
</dbReference>
<dbReference type="PROSITE" id="PS01316">
    <property type="entry name" value="ATP_P_PHORIBOSYLTR"/>
    <property type="match status" value="1"/>
</dbReference>
<keyword id="KW-0028">Amino-acid biosynthesis</keyword>
<keyword id="KW-0067">ATP-binding</keyword>
<keyword id="KW-0963">Cytoplasm</keyword>
<keyword id="KW-0328">Glycosyltransferase</keyword>
<keyword id="KW-0368">Histidine biosynthesis</keyword>
<keyword id="KW-0460">Magnesium</keyword>
<keyword id="KW-0479">Metal-binding</keyword>
<keyword id="KW-0547">Nucleotide-binding</keyword>
<keyword id="KW-0808">Transferase</keyword>
<gene>
    <name evidence="1" type="primary">hisG</name>
    <name type="ordered locus">RPE_0871</name>
</gene>
<protein>
    <recommendedName>
        <fullName evidence="1">ATP phosphoribosyltransferase</fullName>
        <shortName evidence="1">ATP-PRT</shortName>
        <shortName evidence="1">ATP-PRTase</shortName>
        <ecNumber evidence="1">2.4.2.17</ecNumber>
    </recommendedName>
</protein>
<reference key="1">
    <citation type="submission" date="2006-09" db="EMBL/GenBank/DDBJ databases">
        <title>Complete sequence of Rhodopseudomonas palustris BisA53.</title>
        <authorList>
            <consortium name="US DOE Joint Genome Institute"/>
            <person name="Copeland A."/>
            <person name="Lucas S."/>
            <person name="Lapidus A."/>
            <person name="Barry K."/>
            <person name="Detter J.C."/>
            <person name="Glavina del Rio T."/>
            <person name="Hammon N."/>
            <person name="Israni S."/>
            <person name="Dalin E."/>
            <person name="Tice H."/>
            <person name="Pitluck S."/>
            <person name="Chain P."/>
            <person name="Malfatti S."/>
            <person name="Shin M."/>
            <person name="Vergez L."/>
            <person name="Schmutz J."/>
            <person name="Larimer F."/>
            <person name="Land M."/>
            <person name="Hauser L."/>
            <person name="Pelletier D.A."/>
            <person name="Kyrpides N."/>
            <person name="Kim E."/>
            <person name="Harwood C.S."/>
            <person name="Oda Y."/>
            <person name="Richardson P."/>
        </authorList>
    </citation>
    <scope>NUCLEOTIDE SEQUENCE [LARGE SCALE GENOMIC DNA]</scope>
    <source>
        <strain>BisA53</strain>
    </source>
</reference>
<name>HIS1_RHOP5</name>
<feature type="chain" id="PRO_1000004491" description="ATP phosphoribosyltransferase">
    <location>
        <begin position="1"/>
        <end position="325"/>
    </location>
</feature>